<organism>
    <name type="scientific">Rattus norvegicus</name>
    <name type="common">Rat</name>
    <dbReference type="NCBI Taxonomy" id="10116"/>
    <lineage>
        <taxon>Eukaryota</taxon>
        <taxon>Metazoa</taxon>
        <taxon>Chordata</taxon>
        <taxon>Craniata</taxon>
        <taxon>Vertebrata</taxon>
        <taxon>Euteleostomi</taxon>
        <taxon>Mammalia</taxon>
        <taxon>Eutheria</taxon>
        <taxon>Euarchontoglires</taxon>
        <taxon>Glires</taxon>
        <taxon>Rodentia</taxon>
        <taxon>Myomorpha</taxon>
        <taxon>Muroidea</taxon>
        <taxon>Muridae</taxon>
        <taxon>Murinae</taxon>
        <taxon>Rattus</taxon>
    </lineage>
</organism>
<comment type="subcellular location">
    <subcellularLocation>
        <location evidence="3">Mitochondrion</location>
    </subcellularLocation>
</comment>
<comment type="miscellaneous">
    <text>By 2D-PAGE, the determined pI of this protein (spot P2) is: 8.9, its MW is: 25 kDa.</text>
</comment>
<comment type="similarity">
    <text evidence="3">Belongs to the ES1 family.</text>
</comment>
<name>ES1_RAT</name>
<proteinExistence type="evidence at protein level"/>
<sequence length="266" mass="28173">MAAVRVLVSPRLASALLPLSGRHRTTSQRAAIHSSAPRPRARVALVLSGCGVYDGTEIHEASAILVHLSRGGAEVHIFAPDVPQMHVIDHTKGEPSEKESRNVLAESARIARGKITNLAQLSAANHDAAIFPGGFGAAKNLSTFAVDGKDCKVNKEVERVLKEFHGAKKPIGLCCIAPVLAAKVIKGVEVTVGHEQEEGGKWPYAGTAEAVKALGAKHCVKGVTEAHVDQKNKVVTTPAFMCETELHHIHDGIGAMVKKVLELTGK</sequence>
<accession>P56571</accession>
<accession>Q68FS5</accession>
<dbReference type="EMBL" id="BC079380">
    <property type="protein sequence ID" value="AAH79380.1"/>
    <property type="molecule type" value="mRNA"/>
</dbReference>
<dbReference type="RefSeq" id="NP_001004225.1">
    <property type="nucleotide sequence ID" value="NM_001004225.1"/>
</dbReference>
<dbReference type="SMR" id="P56571"/>
<dbReference type="FunCoup" id="P56571">
    <property type="interactions" value="263"/>
</dbReference>
<dbReference type="IntAct" id="P56571">
    <property type="interactions" value="1"/>
</dbReference>
<dbReference type="STRING" id="10116.ENSRNOP00000001609"/>
<dbReference type="GlyGen" id="P56571">
    <property type="glycosylation" value="1 site, 1 O-linked glycan (1 site)"/>
</dbReference>
<dbReference type="iPTMnet" id="P56571"/>
<dbReference type="PhosphoSitePlus" id="P56571"/>
<dbReference type="SwissPalm" id="P56571"/>
<dbReference type="jPOST" id="P56571"/>
<dbReference type="PaxDb" id="10116-ENSRNOP00000001609"/>
<dbReference type="GeneID" id="294326"/>
<dbReference type="KEGG" id="rno:294326"/>
<dbReference type="UCSC" id="RGD:1303003">
    <property type="organism name" value="rat"/>
</dbReference>
<dbReference type="AGR" id="RGD:1303003"/>
<dbReference type="CTD" id="28295"/>
<dbReference type="RGD" id="1303003">
    <property type="gene designation" value="RGD1303003"/>
</dbReference>
<dbReference type="VEuPathDB" id="HostDB:ENSRNOG00000001211"/>
<dbReference type="eggNOG" id="ENOG502QQFM">
    <property type="taxonomic scope" value="Eukaryota"/>
</dbReference>
<dbReference type="HOGENOM" id="CLU_072952_0_0_1"/>
<dbReference type="InParanoid" id="P56571"/>
<dbReference type="OrthoDB" id="543156at2759"/>
<dbReference type="PhylomeDB" id="P56571"/>
<dbReference type="TreeFam" id="TF329408"/>
<dbReference type="PRO" id="PR:P56571"/>
<dbReference type="Proteomes" id="UP000002494">
    <property type="component" value="Chromosome 20"/>
</dbReference>
<dbReference type="Bgee" id="ENSRNOG00000001211">
    <property type="expression patterns" value="Expressed in heart and 20 other cell types or tissues"/>
</dbReference>
<dbReference type="GO" id="GO:0005739">
    <property type="term" value="C:mitochondrion"/>
    <property type="evidence" value="ECO:0000318"/>
    <property type="project" value="GO_Central"/>
</dbReference>
<dbReference type="CDD" id="cd03133">
    <property type="entry name" value="GATase1_ES1"/>
    <property type="match status" value="1"/>
</dbReference>
<dbReference type="FunFam" id="3.40.50.880:FF:000035">
    <property type="entry name" value="ES1 protein homolog, mitochondrial isoform X1"/>
    <property type="match status" value="1"/>
</dbReference>
<dbReference type="Gene3D" id="3.40.50.880">
    <property type="match status" value="1"/>
</dbReference>
<dbReference type="InterPro" id="IPR029062">
    <property type="entry name" value="Class_I_gatase-like"/>
</dbReference>
<dbReference type="NCBIfam" id="NF008747">
    <property type="entry name" value="PRK11780.1"/>
    <property type="match status" value="1"/>
</dbReference>
<dbReference type="PANTHER" id="PTHR10224">
    <property type="entry name" value="ES1 PROTEIN HOMOLOG, MITOCHONDRIAL"/>
    <property type="match status" value="1"/>
</dbReference>
<dbReference type="PANTHER" id="PTHR10224:SF9">
    <property type="entry name" value="GLUTAMINE AMIDOTRANSFERASE-LIKE CLASS 1 DOMAIN-CONTAINING PROTEIN 3, MITOCHONDRIAL-RELATED"/>
    <property type="match status" value="1"/>
</dbReference>
<dbReference type="SUPFAM" id="SSF52317">
    <property type="entry name" value="Class I glutamine amidotransferase-like"/>
    <property type="match status" value="1"/>
</dbReference>
<protein>
    <recommendedName>
        <fullName>ES1 protein homolog, mitochondrial</fullName>
    </recommendedName>
</protein>
<reference key="1">
    <citation type="journal article" date="2004" name="Genome Res.">
        <title>The status, quality, and expansion of the NIH full-length cDNA project: the Mammalian Gene Collection (MGC).</title>
        <authorList>
            <consortium name="The MGC Project Team"/>
        </authorList>
    </citation>
    <scope>NUCLEOTIDE SEQUENCE [LARGE SCALE MRNA]</scope>
    <source>
        <tissue>Kidney</tissue>
    </source>
</reference>
<reference key="2">
    <citation type="journal article" date="1999" name="Electrophoresis">
        <title>A two-dimensional electrophoresis database of rat heart proteins.</title>
        <authorList>
            <person name="Li X.P."/>
            <person name="Pleissner K.-P."/>
            <person name="Scheler C."/>
            <person name="Regitz-Zagrosek V."/>
            <person name="Salnikow J."/>
            <person name="Jungblut P.R."/>
        </authorList>
    </citation>
    <scope>PROTEIN SEQUENCE OF 40-50</scope>
    <source>
        <strain>Wistar</strain>
        <tissue>Heart</tissue>
    </source>
</reference>
<reference key="3">
    <citation type="submission" date="2009-01" db="UniProtKB">
        <authorList>
            <person name="Lubec G."/>
            <person name="Afjehi-Sadat L."/>
            <person name="Chen W.-Q."/>
        </authorList>
    </citation>
    <scope>PROTEIN SEQUENCE OF 115-139; 169-183 AND 222-231</scope>
    <scope>IDENTIFICATION BY MASS SPECTROMETRY</scope>
    <source>
        <strain>Sprague-Dawley</strain>
        <tissue>Hippocampus</tissue>
        <tissue>Spinal cord</tissue>
    </source>
</reference>
<feature type="transit peptide" description="Mitochondrion" evidence="1">
    <location>
        <begin position="1"/>
        <end position="39"/>
    </location>
</feature>
<feature type="chain" id="PRO_0000043354" description="ES1 protein homolog, mitochondrial">
    <location>
        <begin position="40"/>
        <end position="266"/>
    </location>
</feature>
<feature type="modified residue" description="N6-acetyllysine" evidence="2">
    <location>
        <position position="149"/>
    </location>
</feature>
<feature type="modified residue" description="N6-acetyllysine" evidence="2">
    <location>
        <position position="155"/>
    </location>
</feature>
<feature type="modified residue" description="N6-acetyllysine" evidence="2">
    <location>
        <position position="162"/>
    </location>
</feature>
<feature type="modified residue" description="N6-acetyllysine; alternate" evidence="2">
    <location>
        <position position="201"/>
    </location>
</feature>
<feature type="modified residue" description="N6-succinyllysine; alternate" evidence="2">
    <location>
        <position position="201"/>
    </location>
</feature>
<feature type="modified residue" description="N6-acetyllysine" evidence="2">
    <location>
        <position position="217"/>
    </location>
</feature>
<feature type="modified residue" description="N6-acetyllysine; alternate" evidence="2">
    <location>
        <position position="221"/>
    </location>
</feature>
<feature type="modified residue" description="N6-succinyllysine; alternate" evidence="2">
    <location>
        <position position="221"/>
    </location>
</feature>
<feature type="modified residue" description="N6-acetyllysine; alternate" evidence="2">
    <location>
        <position position="231"/>
    </location>
</feature>
<feature type="modified residue" description="N6-succinyllysine; alternate" evidence="2">
    <location>
        <position position="231"/>
    </location>
</feature>
<feature type="sequence conflict" description="In Ref. 2; AA sequence." evidence="3" ref="2">
    <original>C</original>
    <variation>T</variation>
    <location>
        <position position="50"/>
    </location>
</feature>
<evidence type="ECO:0000250" key="1"/>
<evidence type="ECO:0000250" key="2">
    <source>
        <dbReference type="UniProtKB" id="Q9D172"/>
    </source>
</evidence>
<evidence type="ECO:0000305" key="3"/>
<keyword id="KW-0007">Acetylation</keyword>
<keyword id="KW-0903">Direct protein sequencing</keyword>
<keyword id="KW-0496">Mitochondrion</keyword>
<keyword id="KW-1185">Reference proteome</keyword>
<keyword id="KW-0809">Transit peptide</keyword>